<organism>
    <name type="scientific">Xenopus laevis</name>
    <name type="common">African clawed frog</name>
    <dbReference type="NCBI Taxonomy" id="8355"/>
    <lineage>
        <taxon>Eukaryota</taxon>
        <taxon>Metazoa</taxon>
        <taxon>Chordata</taxon>
        <taxon>Craniata</taxon>
        <taxon>Vertebrata</taxon>
        <taxon>Euteleostomi</taxon>
        <taxon>Amphibia</taxon>
        <taxon>Batrachia</taxon>
        <taxon>Anura</taxon>
        <taxon>Pipoidea</taxon>
        <taxon>Pipidae</taxon>
        <taxon>Xenopodinae</taxon>
        <taxon>Xenopus</taxon>
        <taxon>Xenopus</taxon>
    </lineage>
</organism>
<name>SPOPB_XENLA</name>
<gene>
    <name type="primary">spop-b</name>
</gene>
<accession>Q0IHH9</accession>
<proteinExistence type="evidence at transcript level"/>
<feature type="chain" id="PRO_0000274586" description="Speckle-type POZ protein B">
    <location>
        <begin position="1"/>
        <end position="374"/>
    </location>
</feature>
<feature type="domain" description="MATH" evidence="3">
    <location>
        <begin position="31"/>
        <end position="161"/>
    </location>
</feature>
<feature type="domain" description="BTB" evidence="2">
    <location>
        <begin position="173"/>
        <end position="297"/>
    </location>
</feature>
<feature type="region of interest" description="Required for nuclear localization" evidence="1">
    <location>
        <begin position="71"/>
        <end position="191"/>
    </location>
</feature>
<feature type="region of interest" description="Homodimerization" evidence="1">
    <location>
        <begin position="297"/>
        <end position="355"/>
    </location>
</feature>
<dbReference type="EMBL" id="BC123148">
    <property type="protein sequence ID" value="AAI23149.1"/>
    <property type="molecule type" value="mRNA"/>
</dbReference>
<dbReference type="RefSeq" id="NP_001090478.1">
    <property type="nucleotide sequence ID" value="NM_001097009.1"/>
</dbReference>
<dbReference type="RefSeq" id="XP_018093133.1">
    <property type="nucleotide sequence ID" value="XM_018237644.1"/>
</dbReference>
<dbReference type="SMR" id="Q0IHH9"/>
<dbReference type="DNASU" id="779391"/>
<dbReference type="GeneID" id="779391"/>
<dbReference type="KEGG" id="xla:779391"/>
<dbReference type="AGR" id="Xenbase:XB-GENE-1003315"/>
<dbReference type="CTD" id="779391"/>
<dbReference type="Xenbase" id="XB-GENE-1003315">
    <property type="gene designation" value="spop.S"/>
</dbReference>
<dbReference type="OMA" id="DMGSHFG"/>
<dbReference type="OrthoDB" id="6359816at2759"/>
<dbReference type="UniPathway" id="UPA00143"/>
<dbReference type="Proteomes" id="UP000186698">
    <property type="component" value="Chromosome 9_10S"/>
</dbReference>
<dbReference type="Bgee" id="779391">
    <property type="expression patterns" value="Expressed in testis and 19 other cell types or tissues"/>
</dbReference>
<dbReference type="GO" id="GO:0031463">
    <property type="term" value="C:Cul3-RING ubiquitin ligase complex"/>
    <property type="evidence" value="ECO:0000250"/>
    <property type="project" value="UniProtKB"/>
</dbReference>
<dbReference type="GO" id="GO:0005737">
    <property type="term" value="C:cytoplasm"/>
    <property type="evidence" value="ECO:0000318"/>
    <property type="project" value="GO_Central"/>
</dbReference>
<dbReference type="GO" id="GO:0016607">
    <property type="term" value="C:nuclear speck"/>
    <property type="evidence" value="ECO:0007669"/>
    <property type="project" value="UniProtKB-SubCell"/>
</dbReference>
<dbReference type="GO" id="GO:0005634">
    <property type="term" value="C:nucleus"/>
    <property type="evidence" value="ECO:0000250"/>
    <property type="project" value="UniProtKB"/>
</dbReference>
<dbReference type="GO" id="GO:0031625">
    <property type="term" value="F:ubiquitin protein ligase binding"/>
    <property type="evidence" value="ECO:0000318"/>
    <property type="project" value="GO_Central"/>
</dbReference>
<dbReference type="GO" id="GO:0043161">
    <property type="term" value="P:proteasome-mediated ubiquitin-dependent protein catabolic process"/>
    <property type="evidence" value="ECO:0000250"/>
    <property type="project" value="UniProtKB"/>
</dbReference>
<dbReference type="GO" id="GO:0016567">
    <property type="term" value="P:protein ubiquitination"/>
    <property type="evidence" value="ECO:0007669"/>
    <property type="project" value="UniProtKB-UniPathway"/>
</dbReference>
<dbReference type="GO" id="GO:0030162">
    <property type="term" value="P:regulation of proteolysis"/>
    <property type="evidence" value="ECO:0000318"/>
    <property type="project" value="GO_Central"/>
</dbReference>
<dbReference type="CDD" id="cd18518">
    <property type="entry name" value="BACK_SPOP"/>
    <property type="match status" value="1"/>
</dbReference>
<dbReference type="CDD" id="cd18279">
    <property type="entry name" value="BTB_POZ_SPOP-like"/>
    <property type="match status" value="1"/>
</dbReference>
<dbReference type="CDD" id="cd03774">
    <property type="entry name" value="MATH_SPOP"/>
    <property type="match status" value="1"/>
</dbReference>
<dbReference type="FunFam" id="2.60.210.10:FF:000028">
    <property type="entry name" value="Speckle-type POZ protein-like"/>
    <property type="match status" value="1"/>
</dbReference>
<dbReference type="FunFam" id="3.30.710.10:FF:000008">
    <property type="entry name" value="Speckle-type POZ protein-like a"/>
    <property type="match status" value="1"/>
</dbReference>
<dbReference type="Gene3D" id="6.10.250.3030">
    <property type="match status" value="1"/>
</dbReference>
<dbReference type="Gene3D" id="6.20.250.50">
    <property type="match status" value="1"/>
</dbReference>
<dbReference type="Gene3D" id="2.60.210.10">
    <property type="entry name" value="Apoptosis, Tumor Necrosis Factor Receptor Associated Protein 2, Chain A"/>
    <property type="match status" value="1"/>
</dbReference>
<dbReference type="Gene3D" id="3.30.710.10">
    <property type="entry name" value="Potassium Channel Kv1.1, Chain A"/>
    <property type="match status" value="1"/>
</dbReference>
<dbReference type="InterPro" id="IPR056423">
    <property type="entry name" value="BACK_BPM_SPOP"/>
</dbReference>
<dbReference type="InterPro" id="IPR000210">
    <property type="entry name" value="BTB/POZ_dom"/>
</dbReference>
<dbReference type="InterPro" id="IPR002083">
    <property type="entry name" value="MATH/TRAF_dom"/>
</dbReference>
<dbReference type="InterPro" id="IPR011333">
    <property type="entry name" value="SKP1/BTB/POZ_sf"/>
</dbReference>
<dbReference type="InterPro" id="IPR034089">
    <property type="entry name" value="SPOP_C"/>
</dbReference>
<dbReference type="InterPro" id="IPR008974">
    <property type="entry name" value="TRAF-like"/>
</dbReference>
<dbReference type="PANTHER" id="PTHR24413">
    <property type="entry name" value="SPECKLE-TYPE POZ PROTEIN"/>
    <property type="match status" value="1"/>
</dbReference>
<dbReference type="Pfam" id="PF24570">
    <property type="entry name" value="BACK_BPM_SPOP"/>
    <property type="match status" value="1"/>
</dbReference>
<dbReference type="Pfam" id="PF00651">
    <property type="entry name" value="BTB"/>
    <property type="match status" value="1"/>
</dbReference>
<dbReference type="Pfam" id="PF22486">
    <property type="entry name" value="MATH_2"/>
    <property type="match status" value="1"/>
</dbReference>
<dbReference type="SMART" id="SM00225">
    <property type="entry name" value="BTB"/>
    <property type="match status" value="1"/>
</dbReference>
<dbReference type="SMART" id="SM00061">
    <property type="entry name" value="MATH"/>
    <property type="match status" value="1"/>
</dbReference>
<dbReference type="SUPFAM" id="SSF54695">
    <property type="entry name" value="POZ domain"/>
    <property type="match status" value="1"/>
</dbReference>
<dbReference type="SUPFAM" id="SSF49599">
    <property type="entry name" value="TRAF domain-like"/>
    <property type="match status" value="1"/>
</dbReference>
<dbReference type="PROSITE" id="PS50097">
    <property type="entry name" value="BTB"/>
    <property type="match status" value="1"/>
</dbReference>
<dbReference type="PROSITE" id="PS50144">
    <property type="entry name" value="MATH"/>
    <property type="match status" value="1"/>
</dbReference>
<keyword id="KW-0539">Nucleus</keyword>
<keyword id="KW-1185">Reference proteome</keyword>
<keyword id="KW-0833">Ubl conjugation pathway</keyword>
<evidence type="ECO:0000250" key="1"/>
<evidence type="ECO:0000255" key="2">
    <source>
        <dbReference type="PROSITE-ProRule" id="PRU00037"/>
    </source>
</evidence>
<evidence type="ECO:0000255" key="3">
    <source>
        <dbReference type="PROSITE-ProRule" id="PRU00129"/>
    </source>
</evidence>
<evidence type="ECO:0000305" key="4"/>
<sequence length="374" mass="42170">MSRVPSPPPPAEMSSGPVAESWCYTQIKVVKFSYMWTINNFSFCREEMGEVIKSSTFSSGANDKLKWCLRVNPKGLDEESKDYLSLYLLLVSCPKSEVRAKFKFSILNAKGEETKAMESQRAYRFVQGKDWGFKKFIRRDFLLDEANGLLPDDKLTLFCEVSVVQDSVNISGQNTMNMVKVPECRLSDELGGLWENSRFTDCCLCVAGQEFQAHKAILAARSPVFSAMFEHEMEESKKNRVEIKDVEPDVFKEMMCFIYTGKASNLDKMADDLLAAADKYALERLKVMCEEALCSNLSVENAAEILILADLHSADQLKTQAVDFINYHASDVMETSGWKSMVVSHPHLVAEAYRSLASAQCPFLGPPRKRLKQS</sequence>
<reference key="1">
    <citation type="submission" date="2006-09" db="EMBL/GenBank/DDBJ databases">
        <authorList>
            <consortium name="NIH - Xenopus Gene Collection (XGC) project"/>
        </authorList>
    </citation>
    <scope>NUCLEOTIDE SEQUENCE [LARGE SCALE MRNA]</scope>
    <source>
        <tissue>Embryo</tissue>
    </source>
</reference>
<protein>
    <recommendedName>
        <fullName>Speckle-type POZ protein B</fullName>
    </recommendedName>
</protein>
<comment type="function">
    <text evidence="1">Component of a cullin-RING-based BCR (BTB-CUL3-RBX1) E3 ubiquitin-protein ligase complex that mediates the ubiquitination of target proteins, leading most often to their proteasomal degradation.</text>
</comment>
<comment type="pathway">
    <text>Protein modification; protein ubiquitination.</text>
</comment>
<comment type="subunit">
    <text evidence="1">Homodimer. Part of cullin-RING-based BCR (BTB-CUL3-RBX1) E3 ubiquitin-protein ligase complexes that contain CUL3 and SPOP, plus a target protein (By similarity).</text>
</comment>
<comment type="subcellular location">
    <subcellularLocation>
        <location evidence="1">Nucleus</location>
    </subcellularLocation>
    <subcellularLocation>
        <location evidence="1">Nucleus speckle</location>
    </subcellularLocation>
</comment>
<comment type="domain">
    <text evidence="1">The BTB (POZ) domain mediates dimerization and interaction with CUL3.</text>
</comment>
<comment type="domain">
    <text evidence="1">The MATH domain mediates interaction with protein-ubiquitin ligase substrates.</text>
</comment>
<comment type="similarity">
    <text evidence="4">Belongs to the Tdpoz family.</text>
</comment>